<keyword id="KW-0028">Amino-acid biosynthesis</keyword>
<keyword id="KW-0067">ATP-binding</keyword>
<keyword id="KW-0963">Cytoplasm</keyword>
<keyword id="KW-0418">Kinase</keyword>
<keyword id="KW-0547">Nucleotide-binding</keyword>
<keyword id="KW-0641">Proline biosynthesis</keyword>
<keyword id="KW-1185">Reference proteome</keyword>
<keyword id="KW-0808">Transferase</keyword>
<comment type="function">
    <text evidence="1">Catalyzes the transfer of a phosphate group to glutamate to form L-glutamate 5-phosphate.</text>
</comment>
<comment type="catalytic activity">
    <reaction evidence="1">
        <text>L-glutamate + ATP = L-glutamyl 5-phosphate + ADP</text>
        <dbReference type="Rhea" id="RHEA:14877"/>
        <dbReference type="ChEBI" id="CHEBI:29985"/>
        <dbReference type="ChEBI" id="CHEBI:30616"/>
        <dbReference type="ChEBI" id="CHEBI:58274"/>
        <dbReference type="ChEBI" id="CHEBI:456216"/>
        <dbReference type="EC" id="2.7.2.11"/>
    </reaction>
</comment>
<comment type="pathway">
    <text evidence="1">Amino-acid biosynthesis; L-proline biosynthesis; L-glutamate 5-semialdehyde from L-glutamate: step 1/2.</text>
</comment>
<comment type="subcellular location">
    <subcellularLocation>
        <location evidence="1">Cytoplasm</location>
    </subcellularLocation>
</comment>
<comment type="similarity">
    <text evidence="1">Belongs to the glutamate 5-kinase family.</text>
</comment>
<name>PROB_SHEPA</name>
<accession>A8H765</accession>
<evidence type="ECO:0000255" key="1">
    <source>
        <dbReference type="HAMAP-Rule" id="MF_00456"/>
    </source>
</evidence>
<proteinExistence type="inferred from homology"/>
<reference key="1">
    <citation type="submission" date="2007-10" db="EMBL/GenBank/DDBJ databases">
        <title>Complete sequence of Shewanella pealeana ATCC 700345.</title>
        <authorList>
            <consortium name="US DOE Joint Genome Institute"/>
            <person name="Copeland A."/>
            <person name="Lucas S."/>
            <person name="Lapidus A."/>
            <person name="Barry K."/>
            <person name="Glavina del Rio T."/>
            <person name="Dalin E."/>
            <person name="Tice H."/>
            <person name="Pitluck S."/>
            <person name="Chertkov O."/>
            <person name="Brettin T."/>
            <person name="Bruce D."/>
            <person name="Detter J.C."/>
            <person name="Han C."/>
            <person name="Schmutz J."/>
            <person name="Larimer F."/>
            <person name="Land M."/>
            <person name="Hauser L."/>
            <person name="Kyrpides N."/>
            <person name="Kim E."/>
            <person name="Zhao J.-S.Z."/>
            <person name="Manno D."/>
            <person name="Hawari J."/>
            <person name="Richardson P."/>
        </authorList>
    </citation>
    <scope>NUCLEOTIDE SEQUENCE [LARGE SCALE GENOMIC DNA]</scope>
    <source>
        <strain>ATCC 700345 / ANG-SQ1</strain>
    </source>
</reference>
<organism>
    <name type="scientific">Shewanella pealeana (strain ATCC 700345 / ANG-SQ1)</name>
    <dbReference type="NCBI Taxonomy" id="398579"/>
    <lineage>
        <taxon>Bacteria</taxon>
        <taxon>Pseudomonadati</taxon>
        <taxon>Pseudomonadota</taxon>
        <taxon>Gammaproteobacteria</taxon>
        <taxon>Alteromonadales</taxon>
        <taxon>Shewanellaceae</taxon>
        <taxon>Shewanella</taxon>
    </lineage>
</organism>
<feature type="chain" id="PRO_1000081107" description="Glutamate 5-kinase">
    <location>
        <begin position="1"/>
        <end position="372"/>
    </location>
</feature>
<feature type="domain" description="PUA" evidence="1">
    <location>
        <begin position="280"/>
        <end position="358"/>
    </location>
</feature>
<feature type="binding site" evidence="1">
    <location>
        <position position="14"/>
    </location>
    <ligand>
        <name>ATP</name>
        <dbReference type="ChEBI" id="CHEBI:30616"/>
    </ligand>
</feature>
<feature type="binding site" evidence="1">
    <location>
        <position position="54"/>
    </location>
    <ligand>
        <name>substrate</name>
    </ligand>
</feature>
<feature type="binding site" evidence="1">
    <location>
        <position position="141"/>
    </location>
    <ligand>
        <name>substrate</name>
    </ligand>
</feature>
<feature type="binding site" evidence="1">
    <location>
        <position position="153"/>
    </location>
    <ligand>
        <name>substrate</name>
    </ligand>
</feature>
<feature type="binding site" evidence="1">
    <location>
        <begin position="173"/>
        <end position="174"/>
    </location>
    <ligand>
        <name>ATP</name>
        <dbReference type="ChEBI" id="CHEBI:30616"/>
    </ligand>
</feature>
<feature type="binding site" evidence="1">
    <location>
        <begin position="215"/>
        <end position="221"/>
    </location>
    <ligand>
        <name>ATP</name>
        <dbReference type="ChEBI" id="CHEBI:30616"/>
    </ligand>
</feature>
<protein>
    <recommendedName>
        <fullName evidence="1">Glutamate 5-kinase</fullName>
        <ecNumber evidence="1">2.7.2.11</ecNumber>
    </recommendedName>
    <alternativeName>
        <fullName evidence="1">Gamma-glutamyl kinase</fullName>
        <shortName evidence="1">GK</shortName>
    </alternativeName>
</protein>
<sequence>MNLSEIGYRRVVVKLGTSVLTSGSLKLDKAHMVELARQMACLMKAGVEVVLCTSGAIAAGKEHLGYPKLPDTIASKQLLAAVGQSQLILAWSQLFSIYGLHVGQLLLTRADLHDRERYLNARDSLNALLNNGIIPIINENDAVATAEIKVGDNDNLSARAALLCDADLLILLTDQKGLFDADPRKNPDAKLITEVQNIDDSLRMLAGGAVSGLGTGGMATKLEAADIARRAGVEVVIASGHYKDVIQNVVCKKPVGTHFTALEHPLESRKQWILAGPKARGQLVIDAGAIGAVTEKGRSLLSKGITEVKGLFQRGDTLELIDTKGKVYAKGMSRYSSADVTKLAGKHSDSIEEVLGYDYGDAVVHRNDMVVL</sequence>
<dbReference type="EC" id="2.7.2.11" evidence="1"/>
<dbReference type="EMBL" id="CP000851">
    <property type="protein sequence ID" value="ABV88402.1"/>
    <property type="molecule type" value="Genomic_DNA"/>
</dbReference>
<dbReference type="RefSeq" id="WP_012156304.1">
    <property type="nucleotide sequence ID" value="NC_009901.1"/>
</dbReference>
<dbReference type="SMR" id="A8H765"/>
<dbReference type="STRING" id="398579.Spea_3085"/>
<dbReference type="KEGG" id="spl:Spea_3085"/>
<dbReference type="eggNOG" id="COG0263">
    <property type="taxonomic scope" value="Bacteria"/>
</dbReference>
<dbReference type="HOGENOM" id="CLU_025400_2_0_6"/>
<dbReference type="OrthoDB" id="9804434at2"/>
<dbReference type="UniPathway" id="UPA00098">
    <property type="reaction ID" value="UER00359"/>
</dbReference>
<dbReference type="Proteomes" id="UP000002608">
    <property type="component" value="Chromosome"/>
</dbReference>
<dbReference type="GO" id="GO:0005829">
    <property type="term" value="C:cytosol"/>
    <property type="evidence" value="ECO:0007669"/>
    <property type="project" value="TreeGrafter"/>
</dbReference>
<dbReference type="GO" id="GO:0005524">
    <property type="term" value="F:ATP binding"/>
    <property type="evidence" value="ECO:0007669"/>
    <property type="project" value="UniProtKB-KW"/>
</dbReference>
<dbReference type="GO" id="GO:0004349">
    <property type="term" value="F:glutamate 5-kinase activity"/>
    <property type="evidence" value="ECO:0007669"/>
    <property type="project" value="UniProtKB-UniRule"/>
</dbReference>
<dbReference type="GO" id="GO:0003723">
    <property type="term" value="F:RNA binding"/>
    <property type="evidence" value="ECO:0007669"/>
    <property type="project" value="InterPro"/>
</dbReference>
<dbReference type="GO" id="GO:0055129">
    <property type="term" value="P:L-proline biosynthetic process"/>
    <property type="evidence" value="ECO:0007669"/>
    <property type="project" value="UniProtKB-UniRule"/>
</dbReference>
<dbReference type="CDD" id="cd04242">
    <property type="entry name" value="AAK_G5K_ProB"/>
    <property type="match status" value="1"/>
</dbReference>
<dbReference type="CDD" id="cd21157">
    <property type="entry name" value="PUA_G5K"/>
    <property type="match status" value="1"/>
</dbReference>
<dbReference type="FunFam" id="3.40.1160.10:FF:000006">
    <property type="entry name" value="Glutamate 5-kinase"/>
    <property type="match status" value="1"/>
</dbReference>
<dbReference type="Gene3D" id="3.40.1160.10">
    <property type="entry name" value="Acetylglutamate kinase-like"/>
    <property type="match status" value="2"/>
</dbReference>
<dbReference type="Gene3D" id="2.30.130.10">
    <property type="entry name" value="PUA domain"/>
    <property type="match status" value="1"/>
</dbReference>
<dbReference type="HAMAP" id="MF_00456">
    <property type="entry name" value="ProB"/>
    <property type="match status" value="1"/>
</dbReference>
<dbReference type="InterPro" id="IPR036393">
    <property type="entry name" value="AceGlu_kinase-like_sf"/>
</dbReference>
<dbReference type="InterPro" id="IPR001048">
    <property type="entry name" value="Asp/Glu/Uridylate_kinase"/>
</dbReference>
<dbReference type="InterPro" id="IPR041739">
    <property type="entry name" value="G5K_ProB"/>
</dbReference>
<dbReference type="InterPro" id="IPR001057">
    <property type="entry name" value="Glu/AcGlu_kinase"/>
</dbReference>
<dbReference type="InterPro" id="IPR011529">
    <property type="entry name" value="Glu_5kinase"/>
</dbReference>
<dbReference type="InterPro" id="IPR005715">
    <property type="entry name" value="Glu_5kinase/COase_Synthase"/>
</dbReference>
<dbReference type="InterPro" id="IPR019797">
    <property type="entry name" value="Glutamate_5-kinase_CS"/>
</dbReference>
<dbReference type="InterPro" id="IPR002478">
    <property type="entry name" value="PUA"/>
</dbReference>
<dbReference type="InterPro" id="IPR015947">
    <property type="entry name" value="PUA-like_sf"/>
</dbReference>
<dbReference type="InterPro" id="IPR036974">
    <property type="entry name" value="PUA_sf"/>
</dbReference>
<dbReference type="NCBIfam" id="TIGR01027">
    <property type="entry name" value="proB"/>
    <property type="match status" value="1"/>
</dbReference>
<dbReference type="PANTHER" id="PTHR43654">
    <property type="entry name" value="GLUTAMATE 5-KINASE"/>
    <property type="match status" value="1"/>
</dbReference>
<dbReference type="PANTHER" id="PTHR43654:SF1">
    <property type="entry name" value="ISOPENTENYL PHOSPHATE KINASE"/>
    <property type="match status" value="1"/>
</dbReference>
<dbReference type="Pfam" id="PF00696">
    <property type="entry name" value="AA_kinase"/>
    <property type="match status" value="1"/>
</dbReference>
<dbReference type="Pfam" id="PF01472">
    <property type="entry name" value="PUA"/>
    <property type="match status" value="1"/>
</dbReference>
<dbReference type="PIRSF" id="PIRSF000729">
    <property type="entry name" value="GK"/>
    <property type="match status" value="1"/>
</dbReference>
<dbReference type="PRINTS" id="PR00474">
    <property type="entry name" value="GLU5KINASE"/>
</dbReference>
<dbReference type="SMART" id="SM00359">
    <property type="entry name" value="PUA"/>
    <property type="match status" value="1"/>
</dbReference>
<dbReference type="SUPFAM" id="SSF53633">
    <property type="entry name" value="Carbamate kinase-like"/>
    <property type="match status" value="1"/>
</dbReference>
<dbReference type="SUPFAM" id="SSF88697">
    <property type="entry name" value="PUA domain-like"/>
    <property type="match status" value="1"/>
</dbReference>
<dbReference type="PROSITE" id="PS00902">
    <property type="entry name" value="GLUTAMATE_5_KINASE"/>
    <property type="match status" value="1"/>
</dbReference>
<dbReference type="PROSITE" id="PS50890">
    <property type="entry name" value="PUA"/>
    <property type="match status" value="1"/>
</dbReference>
<gene>
    <name evidence="1" type="primary">proB</name>
    <name type="ordered locus">Spea_3085</name>
</gene>